<proteinExistence type="evidence at protein level"/>
<dbReference type="EMBL" id="X71329">
    <property type="protein sequence ID" value="CAA50473.1"/>
    <property type="molecule type" value="Genomic_DNA"/>
</dbReference>
<dbReference type="EMBL" id="Z36024">
    <property type="protein sequence ID" value="CAA85114.1"/>
    <property type="molecule type" value="Genomic_DNA"/>
</dbReference>
<dbReference type="EMBL" id="S59774">
    <property type="protein sequence ID" value="AAC60555.2"/>
    <property type="molecule type" value="Genomic_DNA"/>
</dbReference>
<dbReference type="EMBL" id="AY557873">
    <property type="protein sequence ID" value="AAS56199.1"/>
    <property type="molecule type" value="Genomic_DNA"/>
</dbReference>
<dbReference type="EMBL" id="BK006936">
    <property type="protein sequence ID" value="DAA07270.1"/>
    <property type="molecule type" value="Genomic_DNA"/>
</dbReference>
<dbReference type="PIR" id="S40699">
    <property type="entry name" value="S40699"/>
</dbReference>
<dbReference type="RefSeq" id="NP_009713.1">
    <property type="nucleotide sequence ID" value="NM_001178503.1"/>
</dbReference>
<dbReference type="PDB" id="6HFM">
    <property type="method" value="X-ray"/>
    <property type="resolution" value="1.55 A"/>
    <property type="chains" value="A/B=221-385"/>
</dbReference>
<dbReference type="PDB" id="6HFT">
    <property type="method" value="X-ray"/>
    <property type="resolution" value="2.80 A"/>
    <property type="chains" value="A=70-385"/>
</dbReference>
<dbReference type="PDBsum" id="6HFM"/>
<dbReference type="PDBsum" id="6HFT"/>
<dbReference type="SMR" id="P33313"/>
<dbReference type="BioGRID" id="32854">
    <property type="interactions" value="45"/>
</dbReference>
<dbReference type="DIP" id="DIP-1271N"/>
<dbReference type="FunCoup" id="P33313">
    <property type="interactions" value="1471"/>
</dbReference>
<dbReference type="IntAct" id="P33313">
    <property type="interactions" value="16"/>
</dbReference>
<dbReference type="MINT" id="P33313"/>
<dbReference type="STRING" id="4932.YBR155W"/>
<dbReference type="iPTMnet" id="P33313"/>
<dbReference type="PaxDb" id="4932-YBR155W"/>
<dbReference type="PeptideAtlas" id="P33313"/>
<dbReference type="EnsemblFungi" id="YBR155W_mRNA">
    <property type="protein sequence ID" value="YBR155W"/>
    <property type="gene ID" value="YBR155W"/>
</dbReference>
<dbReference type="GeneID" id="852452"/>
<dbReference type="KEGG" id="sce:YBR155W"/>
<dbReference type="AGR" id="SGD:S000000359"/>
<dbReference type="SGD" id="S000000359">
    <property type="gene designation" value="CNS1"/>
</dbReference>
<dbReference type="VEuPathDB" id="FungiDB:YBR155W"/>
<dbReference type="eggNOG" id="KOG0551">
    <property type="taxonomic scope" value="Eukaryota"/>
</dbReference>
<dbReference type="HOGENOM" id="CLU_040446_0_0_1"/>
<dbReference type="InParanoid" id="P33313"/>
<dbReference type="OMA" id="WRAAQCA"/>
<dbReference type="OrthoDB" id="420195at2759"/>
<dbReference type="BioCyc" id="YEAST:G3O-29105-MONOMER"/>
<dbReference type="BioGRID-ORCS" id="852452">
    <property type="hits" value="1 hit in 10 CRISPR screens"/>
</dbReference>
<dbReference type="PRO" id="PR:P33313"/>
<dbReference type="Proteomes" id="UP000002311">
    <property type="component" value="Chromosome II"/>
</dbReference>
<dbReference type="RNAct" id="P33313">
    <property type="molecule type" value="protein"/>
</dbReference>
<dbReference type="GO" id="GO:0005737">
    <property type="term" value="C:cytoplasm"/>
    <property type="evidence" value="ECO:0000353"/>
    <property type="project" value="SGD"/>
</dbReference>
<dbReference type="GO" id="GO:0005634">
    <property type="term" value="C:nucleus"/>
    <property type="evidence" value="ECO:0000318"/>
    <property type="project" value="GO_Central"/>
</dbReference>
<dbReference type="GO" id="GO:0030544">
    <property type="term" value="F:Hsp70 protein binding"/>
    <property type="evidence" value="ECO:0000314"/>
    <property type="project" value="SGD"/>
</dbReference>
<dbReference type="GO" id="GO:0051879">
    <property type="term" value="F:Hsp90 protein binding"/>
    <property type="evidence" value="ECO:0000314"/>
    <property type="project" value="SGD"/>
</dbReference>
<dbReference type="GO" id="GO:0043022">
    <property type="term" value="F:ribosome binding"/>
    <property type="evidence" value="ECO:0000314"/>
    <property type="project" value="SGD"/>
</dbReference>
<dbReference type="GO" id="GO:0006457">
    <property type="term" value="P:protein folding"/>
    <property type="evidence" value="ECO:0000353"/>
    <property type="project" value="SGD"/>
</dbReference>
<dbReference type="GO" id="GO:0042026">
    <property type="term" value="P:protein refolding"/>
    <property type="evidence" value="ECO:0000316"/>
    <property type="project" value="SGD"/>
</dbReference>
<dbReference type="CDD" id="cd21381">
    <property type="entry name" value="CTWD_TTC4"/>
    <property type="match status" value="1"/>
</dbReference>
<dbReference type="FunFam" id="1.25.40.10:FF:000560">
    <property type="entry name" value="CNS1p TPR-containing co-chaperone"/>
    <property type="match status" value="1"/>
</dbReference>
<dbReference type="Gene3D" id="1.25.40.10">
    <property type="entry name" value="Tetratricopeptide repeat domain"/>
    <property type="match status" value="1"/>
</dbReference>
<dbReference type="InterPro" id="IPR044059">
    <property type="entry name" value="Csn1/TTC4_wheel"/>
</dbReference>
<dbReference type="InterPro" id="IPR011990">
    <property type="entry name" value="TPR-like_helical_dom_sf"/>
</dbReference>
<dbReference type="InterPro" id="IPR019734">
    <property type="entry name" value="TPR_rpt"/>
</dbReference>
<dbReference type="PANTHER" id="PTHR46035">
    <property type="entry name" value="TETRATRICOPEPTIDE REPEAT PROTEIN 4"/>
    <property type="match status" value="1"/>
</dbReference>
<dbReference type="PANTHER" id="PTHR46035:SF1">
    <property type="entry name" value="TETRATRICOPEPTIDE REPEAT PROTEIN 4"/>
    <property type="match status" value="1"/>
</dbReference>
<dbReference type="Pfam" id="PF00515">
    <property type="entry name" value="TPR_1"/>
    <property type="match status" value="1"/>
</dbReference>
<dbReference type="Pfam" id="PF18972">
    <property type="entry name" value="Wheel"/>
    <property type="match status" value="1"/>
</dbReference>
<dbReference type="SMART" id="SM00028">
    <property type="entry name" value="TPR"/>
    <property type="match status" value="2"/>
</dbReference>
<dbReference type="SUPFAM" id="SSF48452">
    <property type="entry name" value="TPR-like"/>
    <property type="match status" value="1"/>
</dbReference>
<dbReference type="PROSITE" id="PS50293">
    <property type="entry name" value="TPR_REGION"/>
    <property type="match status" value="1"/>
</dbReference>
<name>CNS1_YEAST</name>
<feature type="chain" id="PRO_0000106279" description="Hsp70/Hsp90 co-chaperone CNS1">
    <location>
        <begin position="1"/>
        <end position="385"/>
    </location>
</feature>
<feature type="repeat" description="TPR 1">
    <location>
        <begin position="83"/>
        <end position="116"/>
    </location>
</feature>
<feature type="repeat" description="TPR 2">
    <location>
        <begin position="121"/>
        <end position="154"/>
    </location>
</feature>
<feature type="repeat" description="TPR 3">
    <location>
        <begin position="155"/>
        <end position="189"/>
    </location>
</feature>
<feature type="region of interest" description="Disordered" evidence="1">
    <location>
        <begin position="1"/>
        <end position="37"/>
    </location>
</feature>
<feature type="mutagenesis site" description="In CNS1-1; disrupts interaction with Hsp90, temperature-sensitive defect impairing Hsp90-dependent function." evidence="2">
    <original>G</original>
    <variation>D</variation>
    <location>
        <position position="90"/>
    </location>
</feature>
<feature type="mutagenesis site" description="In CNS1-2; disrupts interaction with Hsp90, temperature-sensitive defect impairing Hsp90-dependent function." evidence="2">
    <original>C</original>
    <variation>R</variation>
    <location>
        <position position="140"/>
    </location>
</feature>
<feature type="mutagenesis site" description="In CNS1-3; temperature-sensitive defect impairing Hsp90-dependent function; when associated with G-324 and S-330." evidence="2">
    <original>D</original>
    <variation>G</variation>
    <location>
        <position position="260"/>
    </location>
</feature>
<feature type="mutagenesis site" description="In CNS1-3; temperature-sensitive defect impairing Hsp90-dependent function; when associated with G-260 and S-330." evidence="2">
    <original>E</original>
    <variation>G</variation>
    <location>
        <position position="324"/>
    </location>
</feature>
<feature type="mutagenesis site" description="In CNS1-3; temperature-sensitive defect impairing Hsp90-dependent function; when associated with G-260 and G-324." evidence="2">
    <original>L</original>
    <variation>S</variation>
    <location>
        <position position="330"/>
    </location>
</feature>
<feature type="sequence conflict" description="In Ref. 1; AAC60555." evidence="8" ref="1">
    <original>ANGGYTKP</original>
    <variation>RQMEDIPNQ</variation>
    <location>
        <begin position="6"/>
        <end position="13"/>
    </location>
</feature>
<feature type="helix" evidence="10">
    <location>
        <begin position="79"/>
        <end position="96"/>
    </location>
</feature>
<feature type="helix" evidence="10">
    <location>
        <begin position="99"/>
        <end position="112"/>
    </location>
</feature>
<feature type="helix" evidence="10">
    <location>
        <begin position="117"/>
        <end position="134"/>
    </location>
</feature>
<feature type="helix" evidence="10">
    <location>
        <begin position="137"/>
        <end position="150"/>
    </location>
</feature>
<feature type="helix" evidence="10">
    <location>
        <begin position="155"/>
        <end position="167"/>
    </location>
</feature>
<feature type="helix" evidence="10">
    <location>
        <begin position="171"/>
        <end position="184"/>
    </location>
</feature>
<feature type="helix" evidence="9">
    <location>
        <begin position="222"/>
        <end position="233"/>
    </location>
</feature>
<feature type="strand" evidence="9">
    <location>
        <begin position="241"/>
        <end position="243"/>
    </location>
</feature>
<feature type="helix" evidence="9">
    <location>
        <begin position="246"/>
        <end position="248"/>
    </location>
</feature>
<feature type="strand" evidence="9">
    <location>
        <begin position="254"/>
        <end position="257"/>
    </location>
</feature>
<feature type="strand" evidence="9">
    <location>
        <begin position="265"/>
        <end position="273"/>
    </location>
</feature>
<feature type="helix" evidence="9">
    <location>
        <begin position="274"/>
        <end position="276"/>
    </location>
</feature>
<feature type="strand" evidence="9">
    <location>
        <begin position="278"/>
        <end position="286"/>
    </location>
</feature>
<feature type="helix" evidence="9">
    <location>
        <begin position="291"/>
        <end position="300"/>
    </location>
</feature>
<feature type="helix" evidence="9">
    <location>
        <begin position="311"/>
        <end position="313"/>
    </location>
</feature>
<feature type="turn" evidence="9">
    <location>
        <begin position="316"/>
        <end position="318"/>
    </location>
</feature>
<feature type="strand" evidence="9">
    <location>
        <begin position="319"/>
        <end position="324"/>
    </location>
</feature>
<feature type="strand" evidence="10">
    <location>
        <begin position="326"/>
        <end position="328"/>
    </location>
</feature>
<feature type="strand" evidence="9">
    <location>
        <begin position="330"/>
        <end position="332"/>
    </location>
</feature>
<feature type="strand" evidence="10">
    <location>
        <begin position="335"/>
        <end position="338"/>
    </location>
</feature>
<feature type="helix" evidence="9">
    <location>
        <begin position="339"/>
        <end position="344"/>
    </location>
</feature>
<feature type="strand" evidence="9">
    <location>
        <begin position="346"/>
        <end position="348"/>
    </location>
</feature>
<feature type="strand" evidence="9">
    <location>
        <begin position="356"/>
        <end position="363"/>
    </location>
</feature>
<feature type="helix" evidence="9">
    <location>
        <begin position="364"/>
        <end position="373"/>
    </location>
</feature>
<feature type="helix" evidence="9">
    <location>
        <begin position="376"/>
        <end position="381"/>
    </location>
</feature>
<protein>
    <recommendedName>
        <fullName>Hsp70/Hsp90 co-chaperone CNS1</fullName>
    </recommendedName>
    <alternativeName>
        <fullName>Cyclophilin seven suppressor 1</fullName>
    </alternativeName>
    <alternativeName>
        <fullName>STI1 stress-inducible protein homolog</fullName>
    </alternativeName>
</protein>
<keyword id="KW-0002">3D-structure</keyword>
<keyword id="KW-0143">Chaperone</keyword>
<keyword id="KW-0963">Cytoplasm</keyword>
<keyword id="KW-1185">Reference proteome</keyword>
<keyword id="KW-0677">Repeat</keyword>
<keyword id="KW-0802">TPR repeat</keyword>
<accession>P33313</accession>
<accession>D6VQF0</accession>
<accession>Q02125</accession>
<sequence>MSSVNANGGYTKPQKYVPGPGDPELPPQLSEFKDKTSDEILKEMNRMPFFMTKLDETDGAGGENVELEALKALAYEGEPHEIAENFKKQGNELYKAKRFKDARELYSKGLAVECEDKSINESLYANRAACELELKNYRRCIEDCSKALTINPKNVKCYYRTSKAFFQLNKLEEAKSAATFANQRIDPENKSILNMLSVIDRKEQELKAKEEKQQREAQERENKKIMLESAMTLRNITNIKTHSPVELLNEGKIRLEDPMDFESQLIYPALIMYPTQDEFDFVGEVSELTTVQELVDLVLEGPQERFKKEGKENFTPKKVLVFMETKAGGLIKAGKKLTFHDILKKESPDVPLFDNALKIYIVPKVESEGWISKWDKQKALERRSV</sequence>
<evidence type="ECO:0000256" key="1">
    <source>
        <dbReference type="SAM" id="MobiDB-lite"/>
    </source>
</evidence>
<evidence type="ECO:0000269" key="2">
    <source>
    </source>
</evidence>
<evidence type="ECO:0000269" key="3">
    <source>
    </source>
</evidence>
<evidence type="ECO:0000269" key="4">
    <source>
    </source>
</evidence>
<evidence type="ECO:0000269" key="5">
    <source>
    </source>
</evidence>
<evidence type="ECO:0000269" key="6">
    <source>
    </source>
</evidence>
<evidence type="ECO:0000269" key="7">
    <source>
    </source>
</evidence>
<evidence type="ECO:0000305" key="8"/>
<evidence type="ECO:0007829" key="9">
    <source>
        <dbReference type="PDB" id="6HFM"/>
    </source>
</evidence>
<evidence type="ECO:0007829" key="10">
    <source>
        <dbReference type="PDB" id="6HFT"/>
    </source>
</evidence>
<gene>
    <name type="primary">CNS1</name>
    <name type="ordered locus">YBR155W</name>
    <name type="ORF">YBR1205</name>
</gene>
<reference key="1">
    <citation type="journal article" date="1993" name="Yeast">
        <title>Sequence of a 4.8 kb fragment of Saccharomyces cerevisiae chromosome II including three essential open reading frames.</title>
        <authorList>
            <person name="Baur A."/>
            <person name="Schaaff-Gerstenschlaeger I."/>
            <person name="Boles E."/>
            <person name="Miosga T."/>
            <person name="Rose M."/>
            <person name="Zimmermann F.K."/>
        </authorList>
    </citation>
    <scope>NUCLEOTIDE SEQUENCE [GENOMIC DNA]</scope>
    <source>
        <strain>ATCC 204508 / S288c</strain>
    </source>
</reference>
<reference key="2">
    <citation type="journal article" date="1994" name="Yeast">
        <authorList>
            <person name="Baur A."/>
            <person name="Schaaff-Gerstenschlaeger I."/>
            <person name="Boles E."/>
            <person name="Miosga T."/>
            <person name="Rose M."/>
            <person name="Zimmermann F.K."/>
        </authorList>
    </citation>
    <scope>ERRATUM OF PUBMED:8488729</scope>
</reference>
<reference key="3">
    <citation type="journal article" date="1994" name="EMBO J.">
        <title>Complete DNA sequence of yeast chromosome II.</title>
        <authorList>
            <person name="Feldmann H."/>
            <person name="Aigle M."/>
            <person name="Aljinovic G."/>
            <person name="Andre B."/>
            <person name="Baclet M.C."/>
            <person name="Barthe C."/>
            <person name="Baur A."/>
            <person name="Becam A.-M."/>
            <person name="Biteau N."/>
            <person name="Boles E."/>
            <person name="Brandt T."/>
            <person name="Brendel M."/>
            <person name="Brueckner M."/>
            <person name="Bussereau F."/>
            <person name="Christiansen C."/>
            <person name="Contreras R."/>
            <person name="Crouzet M."/>
            <person name="Cziepluch C."/>
            <person name="Demolis N."/>
            <person name="Delaveau T."/>
            <person name="Doignon F."/>
            <person name="Domdey H."/>
            <person name="Duesterhus S."/>
            <person name="Dubois E."/>
            <person name="Dujon B."/>
            <person name="El Bakkoury M."/>
            <person name="Entian K.-D."/>
            <person name="Feuermann M."/>
            <person name="Fiers W."/>
            <person name="Fobo G.M."/>
            <person name="Fritz C."/>
            <person name="Gassenhuber J."/>
            <person name="Glansdorff N."/>
            <person name="Goffeau A."/>
            <person name="Grivell L.A."/>
            <person name="de Haan M."/>
            <person name="Hein C."/>
            <person name="Herbert C.J."/>
            <person name="Hollenberg C.P."/>
            <person name="Holmstroem K."/>
            <person name="Jacq C."/>
            <person name="Jacquet M."/>
            <person name="Jauniaux J.-C."/>
            <person name="Jonniaux J.-L."/>
            <person name="Kallesoee T."/>
            <person name="Kiesau P."/>
            <person name="Kirchrath L."/>
            <person name="Koetter P."/>
            <person name="Korol S."/>
            <person name="Liebl S."/>
            <person name="Logghe M."/>
            <person name="Lohan A.J.E."/>
            <person name="Louis E.J."/>
            <person name="Li Z.Y."/>
            <person name="Maat M.J."/>
            <person name="Mallet L."/>
            <person name="Mannhaupt G."/>
            <person name="Messenguy F."/>
            <person name="Miosga T."/>
            <person name="Molemans F."/>
            <person name="Mueller S."/>
            <person name="Nasr F."/>
            <person name="Obermaier B."/>
            <person name="Perea J."/>
            <person name="Pierard A."/>
            <person name="Piravandi E."/>
            <person name="Pohl F.M."/>
            <person name="Pohl T.M."/>
            <person name="Potier S."/>
            <person name="Proft M."/>
            <person name="Purnelle B."/>
            <person name="Ramezani Rad M."/>
            <person name="Rieger M."/>
            <person name="Rose M."/>
            <person name="Schaaff-Gerstenschlaeger I."/>
            <person name="Scherens B."/>
            <person name="Schwarzlose C."/>
            <person name="Skala J."/>
            <person name="Slonimski P.P."/>
            <person name="Smits P.H.M."/>
            <person name="Souciet J.-L."/>
            <person name="Steensma H.Y."/>
            <person name="Stucka R."/>
            <person name="Urrestarazu L.A."/>
            <person name="van der Aart Q.J.M."/>
            <person name="Van Dyck L."/>
            <person name="Vassarotti A."/>
            <person name="Vetter I."/>
            <person name="Vierendeels F."/>
            <person name="Vissers S."/>
            <person name="Wagner G."/>
            <person name="de Wergifosse P."/>
            <person name="Wolfe K.H."/>
            <person name="Zagulski M."/>
            <person name="Zimmermann F.K."/>
            <person name="Mewes H.-W."/>
            <person name="Kleine K."/>
        </authorList>
    </citation>
    <scope>NUCLEOTIDE SEQUENCE [LARGE SCALE GENOMIC DNA]</scope>
    <source>
        <strain>ATCC 204508 / S288c</strain>
    </source>
</reference>
<reference key="4">
    <citation type="journal article" date="2014" name="G3 (Bethesda)">
        <title>The reference genome sequence of Saccharomyces cerevisiae: Then and now.</title>
        <authorList>
            <person name="Engel S.R."/>
            <person name="Dietrich F.S."/>
            <person name="Fisk D.G."/>
            <person name="Binkley G."/>
            <person name="Balakrishnan R."/>
            <person name="Costanzo M.C."/>
            <person name="Dwight S.S."/>
            <person name="Hitz B.C."/>
            <person name="Karra K."/>
            <person name="Nash R.S."/>
            <person name="Weng S."/>
            <person name="Wong E.D."/>
            <person name="Lloyd P."/>
            <person name="Skrzypek M.S."/>
            <person name="Miyasato S.R."/>
            <person name="Simison M."/>
            <person name="Cherry J.M."/>
        </authorList>
    </citation>
    <scope>GENOME REANNOTATION</scope>
    <source>
        <strain>ATCC 204508 / S288c</strain>
    </source>
</reference>
<reference key="5">
    <citation type="journal article" date="2007" name="Genome Res.">
        <title>Approaching a complete repository of sequence-verified protein-encoding clones for Saccharomyces cerevisiae.</title>
        <authorList>
            <person name="Hu Y."/>
            <person name="Rolfs A."/>
            <person name="Bhullar B."/>
            <person name="Murthy T.V.S."/>
            <person name="Zhu C."/>
            <person name="Berger M.F."/>
            <person name="Camargo A.A."/>
            <person name="Kelley F."/>
            <person name="McCarron S."/>
            <person name="Jepson D."/>
            <person name="Richardson A."/>
            <person name="Raphael J."/>
            <person name="Moreira D."/>
            <person name="Taycher E."/>
            <person name="Zuo D."/>
            <person name="Mohr S."/>
            <person name="Kane M.F."/>
            <person name="Williamson J."/>
            <person name="Simpson A.J.G."/>
            <person name="Bulyk M.L."/>
            <person name="Harlow E."/>
            <person name="Marsischky G."/>
            <person name="Kolodner R.D."/>
            <person name="LaBaer J."/>
        </authorList>
    </citation>
    <scope>NUCLEOTIDE SEQUENCE [GENOMIC DNA]</scope>
    <source>
        <strain>ATCC 204508 / S288c</strain>
    </source>
</reference>
<reference key="6">
    <citation type="journal article" date="1998" name="Mol. Cell. Biol.">
        <title>CNS1 encodes an essential p60/Sti1 homolog in Saccharomyces cerevisiae that suppresses cyclophilin 40 mutations and interacts with Hsp90.</title>
        <authorList>
            <person name="Dolinski K.J."/>
            <person name="Cardenas M.E."/>
            <person name="Heitman J."/>
        </authorList>
    </citation>
    <scope>CHARACTERIZATION</scope>
    <scope>INTERACTION WITH CPR7 AND HSC82</scope>
    <scope>INDUCTION</scope>
</reference>
<reference key="7">
    <citation type="journal article" date="1998" name="Mol. Cell. Biol.">
        <title>Cns1 is an essential protein associated with the hsp90 chaperone complex in Saccharomyces cerevisiae that can restore cyclophilin 40-dependent functions in cpr7Delta cells.</title>
        <authorList>
            <person name="Marsh J.A."/>
            <person name="Kalton H.M."/>
            <person name="Gaber R.F."/>
        </authorList>
    </citation>
    <scope>CHARACTERIZATION</scope>
    <scope>INTERACTION WITH HSP82</scope>
</reference>
<reference key="8">
    <citation type="journal article" date="2003" name="J. Biol. Chem.">
        <title>Functional interactions between Hsp90 and the co-chaperones Cns1 and Cpr7 in Saccharomyces cerevisiae.</title>
        <authorList>
            <person name="Tesic M."/>
            <person name="Marsh J.A."/>
            <person name="Cullinan S.B."/>
            <person name="Gaber R.F."/>
        </authorList>
    </citation>
    <scope>FUNCTION</scope>
    <scope>SUBUNIT</scope>
    <scope>INTERACTION WITH HSP82</scope>
    <scope>MUTAGENESIS OF GLY-90; CYS-140; ASP-260; GLU-324 AND LEU-330</scope>
</reference>
<reference key="9">
    <citation type="journal article" date="2003" name="Nature">
        <title>Global analysis of protein localization in budding yeast.</title>
        <authorList>
            <person name="Huh W.-K."/>
            <person name="Falvo J.V."/>
            <person name="Gerke L.C."/>
            <person name="Carroll A.S."/>
            <person name="Howson R.W."/>
            <person name="Weissman J.S."/>
            <person name="O'Shea E.K."/>
        </authorList>
    </citation>
    <scope>SUBCELLULAR LOCATION [LARGE SCALE ANALYSIS]</scope>
</reference>
<reference key="10">
    <citation type="journal article" date="2003" name="Nature">
        <title>Global analysis of protein expression in yeast.</title>
        <authorList>
            <person name="Ghaemmaghami S."/>
            <person name="Huh W.-K."/>
            <person name="Bower K."/>
            <person name="Howson R.W."/>
            <person name="Belle A."/>
            <person name="Dephoure N."/>
            <person name="O'Shea E.K."/>
            <person name="Weissman J.S."/>
        </authorList>
    </citation>
    <scope>LEVEL OF PROTEIN EXPRESSION [LARGE SCALE ANALYSIS]</scope>
</reference>
<reference key="11">
    <citation type="journal article" date="2004" name="J. Biol. Chem.">
        <title>Cns1 is an activator of the Ssa1 ATPase activity.</title>
        <authorList>
            <person name="Hainzl O."/>
            <person name="Wegele H."/>
            <person name="Richter K."/>
            <person name="Buchner J."/>
        </authorList>
    </citation>
    <scope>FUNCTION</scope>
    <scope>SUBUNIT</scope>
    <scope>INTERACTION WITH HSP82 AND SSA1</scope>
</reference>
<organism>
    <name type="scientific">Saccharomyces cerevisiae (strain ATCC 204508 / S288c)</name>
    <name type="common">Baker's yeast</name>
    <dbReference type="NCBI Taxonomy" id="559292"/>
    <lineage>
        <taxon>Eukaryota</taxon>
        <taxon>Fungi</taxon>
        <taxon>Dikarya</taxon>
        <taxon>Ascomycota</taxon>
        <taxon>Saccharomycotina</taxon>
        <taxon>Saccharomycetes</taxon>
        <taxon>Saccharomycetales</taxon>
        <taxon>Saccharomycetaceae</taxon>
        <taxon>Saccharomyces</taxon>
    </lineage>
</organism>
<comment type="function">
    <text evidence="2 5">Co-chaperone that binds to the molecular chaperones Hsp90 (HSC82 and HSP82) and Hsp70 (SSA1). Stimulates SSA1 ATPase activity, but not Hsp90 ATPase activity. Involved in only a subset of Hsp90 functions.</text>
</comment>
<comment type="subunit">
    <text evidence="2 5 6 7">Monomer. Component of Hsp70 and Hsp90 chaperone complexes. Interacts (via TPR repeats) with HSC82 and HSP82 (via C-terminal MEEVD pentapeptide). Interacts with CPR7, SSA1 and SPI1.</text>
</comment>
<comment type="interaction">
    <interactant intactId="EBI-4806">
        <id>P33313</id>
    </interactant>
    <interactant intactId="EBI-5436">
        <id>P47103</id>
        <label>CPR7</label>
    </interactant>
    <organismsDiffer>false</organismsDiffer>
    <experiments>2</experiments>
</comment>
<comment type="interaction">
    <interactant intactId="EBI-4806">
        <id>P33313</id>
    </interactant>
    <interactant intactId="EBI-8304">
        <id>P48362</id>
        <label>HGH1</label>
    </interactant>
    <organismsDiffer>false</organismsDiffer>
    <experiments>3</experiments>
</comment>
<comment type="interaction">
    <interactant intactId="EBI-4806">
        <id>P33313</id>
    </interactant>
    <interactant intactId="EBI-8666">
        <id>P15108</id>
        <label>HSC82</label>
    </interactant>
    <organismsDiffer>false</organismsDiffer>
    <experiments>2</experiments>
</comment>
<comment type="interaction">
    <interactant intactId="EBI-4806">
        <id>P33313</id>
    </interactant>
    <interactant intactId="EBI-8659">
        <id>P02829</id>
        <label>HSP82</label>
    </interactant>
    <organismsDiffer>false</organismsDiffer>
    <experiments>6</experiments>
</comment>
<comment type="subcellular location">
    <subcellularLocation>
        <location evidence="3">Cytoplasm</location>
    </subcellularLocation>
</comment>
<comment type="induction">
    <text evidence="6">Not induced by heat shock.</text>
</comment>
<comment type="miscellaneous">
    <text evidence="4">Present with 672 molecules/cell in log phase SD medium.</text>
</comment>
<comment type="similarity">
    <text evidence="8">Belongs to the TTC4 family.</text>
</comment>